<organism>
    <name type="scientific">Ocimum basilicum</name>
    <name type="common">Sweet basil</name>
    <dbReference type="NCBI Taxonomy" id="39350"/>
    <lineage>
        <taxon>Eukaryota</taxon>
        <taxon>Viridiplantae</taxon>
        <taxon>Streptophyta</taxon>
        <taxon>Embryophyta</taxon>
        <taxon>Tracheophyta</taxon>
        <taxon>Spermatophyta</taxon>
        <taxon>Magnoliopsida</taxon>
        <taxon>eudicotyledons</taxon>
        <taxon>Gunneridae</taxon>
        <taxon>Pentapetalae</taxon>
        <taxon>asterids</taxon>
        <taxon>lamiids</taxon>
        <taxon>Lamiales</taxon>
        <taxon>Lamiaceae</taxon>
        <taxon>Nepetoideae</taxon>
        <taxon>Ocimeae</taxon>
        <taxon>Ociminae</taxon>
        <taxon>Ocimum</taxon>
    </lineage>
</organism>
<accession>Q93WU3</accession>
<protein>
    <recommendedName>
        <fullName>Chavicol O-methyltransferase</fullName>
        <ecNumber>2.1.1.146</ecNumber>
    </recommendedName>
    <alternativeName>
        <fullName>(Iso)eugenol O-methyltransferase CVOMT1</fullName>
    </alternativeName>
    <alternativeName>
        <fullName>S-adenosysl-L-methionine:(Iso)eugenol O-methyltransferase CVOMT1</fullName>
    </alternativeName>
</protein>
<feature type="chain" id="PRO_0000204434" description="Chavicol O-methyltransferase">
    <location>
        <begin position="1"/>
        <end position="356"/>
    </location>
</feature>
<feature type="active site" description="Proton acceptor" evidence="2">
    <location>
        <position position="263"/>
    </location>
</feature>
<feature type="binding site" evidence="2">
    <location>
        <position position="202"/>
    </location>
    <ligand>
        <name>S-adenosyl-L-methionine</name>
        <dbReference type="ChEBI" id="CHEBI:59789"/>
    </ligand>
</feature>
<feature type="binding site" evidence="2">
    <location>
        <position position="225"/>
    </location>
    <ligand>
        <name>S-adenosyl-L-methionine</name>
        <dbReference type="ChEBI" id="CHEBI:59789"/>
    </ligand>
</feature>
<feature type="binding site" evidence="2">
    <location>
        <position position="245"/>
    </location>
    <ligand>
        <name>S-adenosyl-L-methionine</name>
        <dbReference type="ChEBI" id="CHEBI:59789"/>
    </ligand>
</feature>
<feature type="binding site" evidence="2">
    <location>
        <position position="246"/>
    </location>
    <ligand>
        <name>S-adenosyl-L-methionine</name>
        <dbReference type="ChEBI" id="CHEBI:59789"/>
    </ligand>
</feature>
<feature type="binding site" evidence="2">
    <location>
        <position position="259"/>
    </location>
    <ligand>
        <name>S-adenosyl-L-methionine</name>
        <dbReference type="ChEBI" id="CHEBI:59789"/>
    </ligand>
</feature>
<feature type="mutagenesis site" description="Induces a substrate preference for eugenol." evidence="3">
    <original>F</original>
    <variation>S</variation>
    <location>
        <position position="260"/>
    </location>
</feature>
<keyword id="KW-0489">Methyltransferase</keyword>
<keyword id="KW-0949">S-adenosyl-L-methionine</keyword>
<keyword id="KW-0808">Transferase</keyword>
<name>CVMT1_OCIBA</name>
<reference key="1">
    <citation type="journal article" date="2002" name="Plant Cell">
        <title>Characterization of phenylpropene O-methyltransferases from sweet basil: facile change of substrate specificity and convergent evolution within a plant O-methyltransferase family.</title>
        <authorList>
            <person name="Gang D.R."/>
            <person name="Lavid N."/>
            <person name="Zubieta C."/>
            <person name="Chen F."/>
            <person name="Beuerle T."/>
            <person name="Lewinsohn E."/>
            <person name="Noel J.P."/>
            <person name="Pichersky E."/>
        </authorList>
    </citation>
    <scope>NUCLEOTIDE SEQUENCE [MRNA]</scope>
    <scope>FUNCTION</scope>
    <scope>ENZYME ACTIVITY</scope>
    <scope>TISSUE SPECIFICITY</scope>
    <scope>BIOPHYSICOCHEMICAL PROPERTIES</scope>
    <scope>MUTAGENESIS OF PHE-260</scope>
    <source>
        <strain>cv. EMX-1</strain>
        <tissue>Peltate glandular trichome</tissue>
    </source>
</reference>
<comment type="function">
    <text evidence="3">Phenylpropene O-methyltransferase that catalyzes the methylation of the para-4-hydroxyl of chavicol to methylchavicol. Can also convert eugenol to methyleugenol but with less affinity.</text>
</comment>
<comment type="catalytic activity">
    <reaction evidence="3">
        <text>(E)-isoeugenol + S-adenosyl-L-methionine = (E)-isomethyleugenol + S-adenosyl-L-homocysteine + H(+)</text>
        <dbReference type="Rhea" id="RHEA:17081"/>
        <dbReference type="ChEBI" id="CHEBI:6877"/>
        <dbReference type="ChEBI" id="CHEBI:15378"/>
        <dbReference type="ChEBI" id="CHEBI:50545"/>
        <dbReference type="ChEBI" id="CHEBI:57856"/>
        <dbReference type="ChEBI" id="CHEBI:59789"/>
        <dbReference type="EC" id="2.1.1.146"/>
    </reaction>
</comment>
<comment type="biophysicochemical properties">
    <kinetics>
        <KM evidence="3">6 uM for chavicol</KM>
    </kinetics>
</comment>
<comment type="pathway">
    <text>Aromatic compound metabolism; phenylpropanoid biosynthesis.</text>
</comment>
<comment type="subunit">
    <text evidence="1">Homodimer.</text>
</comment>
<comment type="tissue specificity">
    <text evidence="3">Specifically expressed in the peltate glandular trichomes on the surface of the young basil leaves.</text>
</comment>
<comment type="similarity">
    <text evidence="2">Belongs to the class I-like SAM-binding methyltransferase superfamily. Cation-independent O-methyltransferase family. COMT subfamily.</text>
</comment>
<evidence type="ECO:0000250" key="1"/>
<evidence type="ECO:0000255" key="2">
    <source>
        <dbReference type="PROSITE-ProRule" id="PRU01020"/>
    </source>
</evidence>
<evidence type="ECO:0000269" key="3">
    <source>
    </source>
</evidence>
<proteinExistence type="evidence at protein level"/>
<sequence length="356" mass="39916">MALQNMDISLSTEQLLQAQAHVWNHMYAFANSMSLKCAIQLGIPDILHKHDHPMTLSQLLKAIPINKEKSQSFQRLMRALVNSNFFIEENSNNQEVCYWLTPASRLLLKGAPLTVAPLVQVVLDPTFTNPWHYMSEWFKHENHATQFEAANGCTFWEKLANKPSMGRFFDEAMSCDSRLVAHVLTKDYKHVIDGIRTLVDVGGGNGTMAKAIVEAVPTMKCTVLDLPHVVAGLESTDKLSYIGGDMFQSIPSADAILLKFIIHDWDDEEGLKILKRCKDAVGIGGKVIIIDVVVGVNHDVDEVLEDQLHFDMAMMSYFNAKERTMNEWEKLISAAGFTSYKLTPAFGVRSLIEAYP</sequence>
<dbReference type="EC" id="2.1.1.146"/>
<dbReference type="EMBL" id="AF435007">
    <property type="protein sequence ID" value="AAL30423.1"/>
    <property type="molecule type" value="mRNA"/>
</dbReference>
<dbReference type="SMR" id="Q93WU3"/>
<dbReference type="KEGG" id="ag:AAL30423"/>
<dbReference type="SABIO-RK" id="Q93WU3"/>
<dbReference type="UniPathway" id="UPA00711"/>
<dbReference type="GO" id="GO:0050630">
    <property type="term" value="F:(iso)eugenol O-methyltransferase activity"/>
    <property type="evidence" value="ECO:0007669"/>
    <property type="project" value="UniProtKB-EC"/>
</dbReference>
<dbReference type="GO" id="GO:0046983">
    <property type="term" value="F:protein dimerization activity"/>
    <property type="evidence" value="ECO:0007669"/>
    <property type="project" value="InterPro"/>
</dbReference>
<dbReference type="GO" id="GO:0032259">
    <property type="term" value="P:methylation"/>
    <property type="evidence" value="ECO:0007669"/>
    <property type="project" value="UniProtKB-KW"/>
</dbReference>
<dbReference type="GO" id="GO:0009699">
    <property type="term" value="P:phenylpropanoid biosynthetic process"/>
    <property type="evidence" value="ECO:0007669"/>
    <property type="project" value="UniProtKB-UniPathway"/>
</dbReference>
<dbReference type="FunFam" id="1.10.10.10:FF:000213">
    <property type="entry name" value="Coniferyl alcohol 9-O-methyltransferase"/>
    <property type="match status" value="1"/>
</dbReference>
<dbReference type="FunFam" id="3.40.50.150:FF:000057">
    <property type="entry name" value="O-methyltransferase ZRP4"/>
    <property type="match status" value="1"/>
</dbReference>
<dbReference type="Gene3D" id="3.40.50.150">
    <property type="entry name" value="Vaccinia Virus protein VP39"/>
    <property type="match status" value="1"/>
</dbReference>
<dbReference type="Gene3D" id="1.10.10.10">
    <property type="entry name" value="Winged helix-like DNA-binding domain superfamily/Winged helix DNA-binding domain"/>
    <property type="match status" value="1"/>
</dbReference>
<dbReference type="InterPro" id="IPR016461">
    <property type="entry name" value="COMT-like"/>
</dbReference>
<dbReference type="InterPro" id="IPR001077">
    <property type="entry name" value="O_MeTrfase_dom"/>
</dbReference>
<dbReference type="InterPro" id="IPR012967">
    <property type="entry name" value="Plant_O-MeTrfase_dimerisation"/>
</dbReference>
<dbReference type="InterPro" id="IPR029063">
    <property type="entry name" value="SAM-dependent_MTases_sf"/>
</dbReference>
<dbReference type="InterPro" id="IPR036388">
    <property type="entry name" value="WH-like_DNA-bd_sf"/>
</dbReference>
<dbReference type="InterPro" id="IPR036390">
    <property type="entry name" value="WH_DNA-bd_sf"/>
</dbReference>
<dbReference type="PANTHER" id="PTHR11746">
    <property type="entry name" value="O-METHYLTRANSFERASE"/>
    <property type="match status" value="1"/>
</dbReference>
<dbReference type="Pfam" id="PF08100">
    <property type="entry name" value="Dimerisation"/>
    <property type="match status" value="1"/>
</dbReference>
<dbReference type="Pfam" id="PF00891">
    <property type="entry name" value="Methyltransf_2"/>
    <property type="match status" value="1"/>
</dbReference>
<dbReference type="PIRSF" id="PIRSF005739">
    <property type="entry name" value="O-mtase"/>
    <property type="match status" value="1"/>
</dbReference>
<dbReference type="SUPFAM" id="SSF53335">
    <property type="entry name" value="S-adenosyl-L-methionine-dependent methyltransferases"/>
    <property type="match status" value="1"/>
</dbReference>
<dbReference type="SUPFAM" id="SSF46785">
    <property type="entry name" value="Winged helix' DNA-binding domain"/>
    <property type="match status" value="1"/>
</dbReference>
<dbReference type="PROSITE" id="PS51683">
    <property type="entry name" value="SAM_OMT_II"/>
    <property type="match status" value="1"/>
</dbReference>
<gene>
    <name type="primary">CVOMT1</name>
</gene>